<dbReference type="EMBL" id="AF093202">
    <property type="protein sequence ID" value="AAC83711.1"/>
    <property type="molecule type" value="mRNA"/>
</dbReference>
<dbReference type="EMBL" id="AF093203">
    <property type="protein sequence ID" value="AAC83712.1"/>
    <property type="molecule type" value="mRNA"/>
</dbReference>
<dbReference type="SMR" id="Q9YS17"/>
<dbReference type="Proteomes" id="UP000008175">
    <property type="component" value="Genome"/>
</dbReference>
<dbReference type="GO" id="GO:0005576">
    <property type="term" value="C:extracellular region"/>
    <property type="evidence" value="ECO:0007669"/>
    <property type="project" value="UniProtKB-SubCell"/>
</dbReference>
<dbReference type="GO" id="GO:0044155">
    <property type="term" value="C:host caveola"/>
    <property type="evidence" value="ECO:0007669"/>
    <property type="project" value="UniProtKB-SubCell"/>
</dbReference>
<dbReference type="GO" id="GO:0044169">
    <property type="term" value="C:host cell rough endoplasmic reticulum membrane"/>
    <property type="evidence" value="ECO:0007669"/>
    <property type="project" value="UniProtKB-SubCell"/>
</dbReference>
<dbReference type="GO" id="GO:0016020">
    <property type="term" value="C:membrane"/>
    <property type="evidence" value="ECO:0007669"/>
    <property type="project" value="UniProtKB-UniRule"/>
</dbReference>
<dbReference type="GO" id="GO:0015267">
    <property type="term" value="F:channel activity"/>
    <property type="evidence" value="ECO:0007669"/>
    <property type="project" value="UniProtKB-KW"/>
</dbReference>
<dbReference type="GO" id="GO:0090729">
    <property type="term" value="F:toxin activity"/>
    <property type="evidence" value="ECO:0007669"/>
    <property type="project" value="UniProtKB-UniRule"/>
</dbReference>
<dbReference type="GO" id="GO:0034220">
    <property type="term" value="P:monoatomic ion transmembrane transport"/>
    <property type="evidence" value="ECO:0007669"/>
    <property type="project" value="UniProtKB-KW"/>
</dbReference>
<dbReference type="GO" id="GO:0039520">
    <property type="term" value="P:symbiont-mediated activation of host autophagy"/>
    <property type="evidence" value="ECO:0007669"/>
    <property type="project" value="UniProtKB-KW"/>
</dbReference>
<dbReference type="GO" id="GO:0016032">
    <property type="term" value="P:viral process"/>
    <property type="evidence" value="ECO:0007669"/>
    <property type="project" value="UniProtKB-UniRule"/>
</dbReference>
<dbReference type="HAMAP" id="MF_04091">
    <property type="entry name" value="ROTA_NSP4"/>
    <property type="match status" value="1"/>
</dbReference>
<dbReference type="InterPro" id="IPR002107">
    <property type="entry name" value="Rotavirus_NSP4"/>
</dbReference>
<keyword id="KW-1072">Activation of host autophagy by virus</keyword>
<keyword id="KW-0260">Enterotoxin</keyword>
<keyword id="KW-0325">Glycoprotein</keyword>
<keyword id="KW-1038">Host endoplasmic reticulum</keyword>
<keyword id="KW-1043">Host membrane</keyword>
<keyword id="KW-0945">Host-virus interaction</keyword>
<keyword id="KW-0407">Ion channel</keyword>
<keyword id="KW-0406">Ion transport</keyword>
<keyword id="KW-0472">Membrane</keyword>
<keyword id="KW-0964">Secreted</keyword>
<keyword id="KW-0735">Signal-anchor</keyword>
<keyword id="KW-0800">Toxin</keyword>
<keyword id="KW-0812">Transmembrane</keyword>
<keyword id="KW-1133">Transmembrane helix</keyword>
<keyword id="KW-0813">Transport</keyword>
<keyword id="KW-1182">Viral ion channel</keyword>
<keyword id="KW-0843">Virulence</keyword>
<feature type="chain" id="PRO_0000369891" description="Non-structural glycoprotein 4">
    <location>
        <begin position="1"/>
        <end position="150"/>
    </location>
</feature>
<feature type="topological domain" description="Lumenal" evidence="1">
    <location>
        <begin position="1"/>
        <end position="15"/>
    </location>
</feature>
<feature type="transmembrane region" description="Helical; Signal-anchor for type III membrane protein" evidence="1">
    <location>
        <begin position="16"/>
        <end position="30"/>
    </location>
</feature>
<feature type="topological domain" description="Cytoplasmic" evidence="1">
    <location>
        <begin position="31"/>
        <end position="150"/>
    </location>
</feature>
<feature type="glycosylation site" description="N-linked (GlcNAc...) asparagine; by host" evidence="1">
    <location>
        <position position="5"/>
    </location>
</feature>
<feature type="sequence variant" description="In strain: Cowden-virulent.">
    <original>F</original>
    <variation>L</variation>
    <location>
        <position position="50"/>
    </location>
</feature>
<feature type="sequence variant" description="In strain: Cowden-virulent.">
    <original>D</original>
    <variation>N</variation>
    <location>
        <position position="97"/>
    </location>
</feature>
<sequence length="150" mass="17489">MEFINQTFFSDYSEGKIDTIPYALGIVLALTNGSRILKFINLLISLLRKFIITSKTVIGKFKIENNTSHQNDDIHKEYEEVMKQMREMRVHVTALFDSIHKDNMEWRMSESIRREKKREMKASTAENEVKIHTNDVNICDTSGLETEVCL</sequence>
<protein>
    <recommendedName>
        <fullName evidence="1">Non-structural glycoprotein 4</fullName>
        <shortName evidence="1">NSP4</shortName>
    </recommendedName>
    <alternativeName>
        <fullName evidence="1">NCVP5</fullName>
    </alternativeName>
    <alternativeName>
        <fullName evidence="1">NS28</fullName>
    </alternativeName>
</protein>
<organismHost>
    <name type="scientific">Sus scrofa</name>
    <name type="common">Pig</name>
    <dbReference type="NCBI Taxonomy" id="9823"/>
</organismHost>
<reference key="1">
    <citation type="journal article" date="1999" name="Virus Genes">
        <title>Comparisons of nucleotide and deduced amino acid sequences of NSP4 genes of virulent and attenuated pairs of group A and C rotaviruses.</title>
        <authorList>
            <person name="Chang K.O."/>
            <person name="Kim Y.J."/>
            <person name="Saif L.J."/>
        </authorList>
    </citation>
    <scope>NUCLEOTIDE SEQUENCE [MRNA]</scope>
    <source>
        <strain>Cowden-attenuated</strain>
        <strain>Cowden-virulent</strain>
    </source>
</reference>
<proteinExistence type="evidence at transcript level"/>
<name>NSP4_ROTPC</name>
<organism>
    <name type="scientific">Rotavirus C (strain RVC/Pig/United States/Cowden/1980)</name>
    <name type="common">RV-C</name>
    <dbReference type="NCBI Taxonomy" id="10916"/>
    <lineage>
        <taxon>Viruses</taxon>
        <taxon>Riboviria</taxon>
        <taxon>Orthornavirae</taxon>
        <taxon>Duplornaviricota</taxon>
        <taxon>Resentoviricetes</taxon>
        <taxon>Reovirales</taxon>
        <taxon>Sedoreoviridae</taxon>
        <taxon>Rotavirus</taxon>
        <taxon>Rotavirus C</taxon>
    </lineage>
</organism>
<evidence type="ECO:0000255" key="1">
    <source>
        <dbReference type="HAMAP-Rule" id="MF_04091"/>
    </source>
</evidence>
<accession>Q9YS17</accession>
<accession>Q9YS18</accession>
<comment type="function">
    <text evidence="1">Plays an essential role in the virus replication cycle by acting as a viroporin. Creates a pore in the host endoplasmic reticulum and as a consequence releases Ca(2+) in the cytoplasm of infected cell. In turn, high levels of cytoplasmic calcium trigger membrane trafficking and transport of viral ER-associated proteins to viroplasms, sites of viral genome replication and immature particle assembly.</text>
</comment>
<comment type="function">
    <text evidence="1">The secreted form acts as an enterotoxin that causes phospholipase C-dependent elevation of the intracellular calcium concentration in host intestinal mucosa cells. Increased concentration of intracellular calcium disrupts the cytoskeleton and the tight junctions, raising the paracellular permeability. Potentiates chloride ion secretion through a calcium ion-dependent signaling pathway, inducing age-dependent diarrhea. To perform this enterotoxigenic role in vivo, NSP4 is released from infected enterocytes in a soluble form capable of diffusing within the intestinal lumen and interacting with host plasma membrane receptors on neighboring epithelial cells such as integrins ITGA1/ITGB1 and ITGA2/ITGB1.</text>
</comment>
<comment type="subunit">
    <text evidence="1">Homotetramer. Interacts with the immature particle in the viroplasm. Interacts with host CAV1, early and late in infection. Interacts with host integrin ITGA1/ITGB1 heterodimer. Interacts with host integrin ITGA2/ITGB1 heterodimer. Interaction with microtubules blocks trafficking to the Golgi apparatus.</text>
</comment>
<comment type="subcellular location">
    <subcellularLocation>
        <location evidence="1">Host rough endoplasmic reticulum membrane</location>
        <topology evidence="1">Single-pass type III membrane protein</topology>
    </subcellularLocation>
    <subcellularLocation>
        <location evidence="1">Host membrane</location>
        <location evidence="1">Host caveola</location>
        <topology evidence="1">Single-pass type III membrane protein</topology>
    </subcellularLocation>
    <subcellularLocation>
        <location evidence="1">Secreted</location>
    </subcellularLocation>
    <text evidence="1">NSP4 also localizes in vesicular structures which contain autophagosomal markers and associate with viroplasms in virus-infected cells. Additionally, a soluble form of glycosylated NSP4 is secreted despite retention of its transmembrane domain.</text>
</comment>
<comment type="PTM">
    <text evidence="1">The N-glycosyl content is primarily Man(9)GlcNAc, with a small amount of Man(8)GlcNAc.</text>
</comment>
<comment type="similarity">
    <text evidence="1">Belongs to the rotavirus NSP4 family.</text>
</comment>